<feature type="chain" id="PRO_1000058426" description="Threonine--tRNA ligase">
    <location>
        <begin position="1"/>
        <end position="642"/>
    </location>
</feature>
<feature type="domain" description="TGS" evidence="2">
    <location>
        <begin position="1"/>
        <end position="61"/>
    </location>
</feature>
<feature type="region of interest" description="Catalytic" evidence="1">
    <location>
        <begin position="243"/>
        <end position="534"/>
    </location>
</feature>
<feature type="binding site" evidence="1">
    <location>
        <position position="334"/>
    </location>
    <ligand>
        <name>Zn(2+)</name>
        <dbReference type="ChEBI" id="CHEBI:29105"/>
    </ligand>
</feature>
<feature type="binding site" evidence="1">
    <location>
        <position position="385"/>
    </location>
    <ligand>
        <name>Zn(2+)</name>
        <dbReference type="ChEBI" id="CHEBI:29105"/>
    </ligand>
</feature>
<feature type="binding site" evidence="1">
    <location>
        <position position="511"/>
    </location>
    <ligand>
        <name>Zn(2+)</name>
        <dbReference type="ChEBI" id="CHEBI:29105"/>
    </ligand>
</feature>
<keyword id="KW-0030">Aminoacyl-tRNA synthetase</keyword>
<keyword id="KW-0067">ATP-binding</keyword>
<keyword id="KW-0963">Cytoplasm</keyword>
<keyword id="KW-0436">Ligase</keyword>
<keyword id="KW-0479">Metal-binding</keyword>
<keyword id="KW-0547">Nucleotide-binding</keyword>
<keyword id="KW-0648">Protein biosynthesis</keyword>
<keyword id="KW-0694">RNA-binding</keyword>
<keyword id="KW-0820">tRNA-binding</keyword>
<keyword id="KW-0862">Zinc</keyword>
<accession>A4W9M3</accession>
<proteinExistence type="inferred from homology"/>
<organism>
    <name type="scientific">Enterobacter sp. (strain 638)</name>
    <dbReference type="NCBI Taxonomy" id="399742"/>
    <lineage>
        <taxon>Bacteria</taxon>
        <taxon>Pseudomonadati</taxon>
        <taxon>Pseudomonadota</taxon>
        <taxon>Gammaproteobacteria</taxon>
        <taxon>Enterobacterales</taxon>
        <taxon>Enterobacteriaceae</taxon>
        <taxon>Enterobacter</taxon>
    </lineage>
</organism>
<gene>
    <name evidence="1" type="primary">thrS</name>
    <name type="ordered locus">Ent638_1724</name>
</gene>
<name>SYT_ENT38</name>
<reference key="1">
    <citation type="journal article" date="2010" name="PLoS Genet.">
        <title>Genome sequence of the plant growth promoting endophytic bacterium Enterobacter sp. 638.</title>
        <authorList>
            <person name="Taghavi S."/>
            <person name="van der Lelie D."/>
            <person name="Hoffman A."/>
            <person name="Zhang Y.B."/>
            <person name="Walla M.D."/>
            <person name="Vangronsveld J."/>
            <person name="Newman L."/>
            <person name="Monchy S."/>
        </authorList>
    </citation>
    <scope>NUCLEOTIDE SEQUENCE [LARGE SCALE GENOMIC DNA]</scope>
    <source>
        <strain>638</strain>
    </source>
</reference>
<sequence length="642" mass="73822">MPVITLPDGSQRQFDRAVSPMDVALDIGPGLAKATIAGRVNGELVDASDLIENDAQLSIITAKDAEGIEIIRHSCAHLLGHAIKQLWPNTKMAIGPVIDNGFYYDVDLDHTLTQEDIDALEKRMHELAETNYDVIKKNVSWHEARETFVKRGENYKVSILDENISHDDKPGLYHHEEYVDMCRGPHVPNMRFCHHFKLMKIAGAYWRGDSNNKMLQRIYGTAWADKKALNAYLVRLEEAAKRDHRKIGKQLDLYHMQEEAPGMVFWHNDGWTIFRELETFVRSKLKEYQYQEVKGPFMMDRVLWEKTGHWDNYKDAMFTTSSENREYCIKPMNCPGHVQIFNQGLKSYRDLPLRMAEFGSCHRNEPSGALHGLMRVRGFTQDDAHIFCTEGQVRDEVNACIRMVYDMYSTFGFEKIVVKLSTRPEKRIGSDETWDRAEADLAVALEENNIPFEYQLGEGAFYGPKIEFTLYDCLDRAWQCGTVQLDFSLPQRLSASYVGEDNERQIPVMIHRAILGSIERFIGILTEEFAGFFPTWLAPVQVVVMNITDSQADYVKELTQKLQNAGIRVKADLRNEKIGFKIREHTLRRVPYMLVCGDKEVESGKVAVRTRRGKDLGSLDVNEVIEKLRLEIRSRSLQQLEV</sequence>
<evidence type="ECO:0000255" key="1">
    <source>
        <dbReference type="HAMAP-Rule" id="MF_00184"/>
    </source>
</evidence>
<evidence type="ECO:0000255" key="2">
    <source>
        <dbReference type="PROSITE-ProRule" id="PRU01228"/>
    </source>
</evidence>
<dbReference type="EC" id="6.1.1.3" evidence="1"/>
<dbReference type="EMBL" id="CP000653">
    <property type="protein sequence ID" value="ABP60403.1"/>
    <property type="molecule type" value="Genomic_DNA"/>
</dbReference>
<dbReference type="RefSeq" id="WP_012017119.1">
    <property type="nucleotide sequence ID" value="NC_009436.1"/>
</dbReference>
<dbReference type="SMR" id="A4W9M3"/>
<dbReference type="STRING" id="399742.Ent638_1724"/>
<dbReference type="KEGG" id="ent:Ent638_1724"/>
<dbReference type="eggNOG" id="COG0441">
    <property type="taxonomic scope" value="Bacteria"/>
</dbReference>
<dbReference type="HOGENOM" id="CLU_008554_0_1_6"/>
<dbReference type="OrthoDB" id="9802304at2"/>
<dbReference type="Proteomes" id="UP000000230">
    <property type="component" value="Chromosome"/>
</dbReference>
<dbReference type="GO" id="GO:0005829">
    <property type="term" value="C:cytosol"/>
    <property type="evidence" value="ECO:0007669"/>
    <property type="project" value="TreeGrafter"/>
</dbReference>
<dbReference type="GO" id="GO:0005524">
    <property type="term" value="F:ATP binding"/>
    <property type="evidence" value="ECO:0007669"/>
    <property type="project" value="UniProtKB-UniRule"/>
</dbReference>
<dbReference type="GO" id="GO:0046872">
    <property type="term" value="F:metal ion binding"/>
    <property type="evidence" value="ECO:0007669"/>
    <property type="project" value="UniProtKB-KW"/>
</dbReference>
<dbReference type="GO" id="GO:0004829">
    <property type="term" value="F:threonine-tRNA ligase activity"/>
    <property type="evidence" value="ECO:0007669"/>
    <property type="project" value="UniProtKB-UniRule"/>
</dbReference>
<dbReference type="GO" id="GO:0000049">
    <property type="term" value="F:tRNA binding"/>
    <property type="evidence" value="ECO:0007669"/>
    <property type="project" value="UniProtKB-KW"/>
</dbReference>
<dbReference type="GO" id="GO:0006435">
    <property type="term" value="P:threonyl-tRNA aminoacylation"/>
    <property type="evidence" value="ECO:0007669"/>
    <property type="project" value="UniProtKB-UniRule"/>
</dbReference>
<dbReference type="CDD" id="cd01667">
    <property type="entry name" value="TGS_ThrRS"/>
    <property type="match status" value="1"/>
</dbReference>
<dbReference type="CDD" id="cd00860">
    <property type="entry name" value="ThrRS_anticodon"/>
    <property type="match status" value="1"/>
</dbReference>
<dbReference type="CDD" id="cd00771">
    <property type="entry name" value="ThrRS_core"/>
    <property type="match status" value="1"/>
</dbReference>
<dbReference type="FunFam" id="3.10.20.30:FF:000005">
    <property type="entry name" value="Threonine--tRNA ligase"/>
    <property type="match status" value="1"/>
</dbReference>
<dbReference type="FunFam" id="3.30.54.20:FF:000002">
    <property type="entry name" value="Threonine--tRNA ligase"/>
    <property type="match status" value="1"/>
</dbReference>
<dbReference type="FunFam" id="3.30.930.10:FF:000002">
    <property type="entry name" value="Threonine--tRNA ligase"/>
    <property type="match status" value="1"/>
</dbReference>
<dbReference type="FunFam" id="3.40.50.800:FF:000001">
    <property type="entry name" value="Threonine--tRNA ligase"/>
    <property type="match status" value="1"/>
</dbReference>
<dbReference type="FunFam" id="3.30.980.10:FF:000005">
    <property type="entry name" value="Threonyl-tRNA synthetase, mitochondrial"/>
    <property type="match status" value="1"/>
</dbReference>
<dbReference type="Gene3D" id="3.10.20.30">
    <property type="match status" value="1"/>
</dbReference>
<dbReference type="Gene3D" id="3.30.54.20">
    <property type="match status" value="1"/>
</dbReference>
<dbReference type="Gene3D" id="3.40.50.800">
    <property type="entry name" value="Anticodon-binding domain"/>
    <property type="match status" value="1"/>
</dbReference>
<dbReference type="Gene3D" id="3.30.930.10">
    <property type="entry name" value="Bira Bifunctional Protein, Domain 2"/>
    <property type="match status" value="1"/>
</dbReference>
<dbReference type="Gene3D" id="3.30.980.10">
    <property type="entry name" value="Threonyl-trna Synthetase, Chain A, domain 2"/>
    <property type="match status" value="1"/>
</dbReference>
<dbReference type="HAMAP" id="MF_00184">
    <property type="entry name" value="Thr_tRNA_synth"/>
    <property type="match status" value="1"/>
</dbReference>
<dbReference type="InterPro" id="IPR002314">
    <property type="entry name" value="aa-tRNA-synt_IIb"/>
</dbReference>
<dbReference type="InterPro" id="IPR006195">
    <property type="entry name" value="aa-tRNA-synth_II"/>
</dbReference>
<dbReference type="InterPro" id="IPR045864">
    <property type="entry name" value="aa-tRNA-synth_II/BPL/LPL"/>
</dbReference>
<dbReference type="InterPro" id="IPR004154">
    <property type="entry name" value="Anticodon-bd"/>
</dbReference>
<dbReference type="InterPro" id="IPR036621">
    <property type="entry name" value="Anticodon-bd_dom_sf"/>
</dbReference>
<dbReference type="InterPro" id="IPR012675">
    <property type="entry name" value="Beta-grasp_dom_sf"/>
</dbReference>
<dbReference type="InterPro" id="IPR004095">
    <property type="entry name" value="TGS"/>
</dbReference>
<dbReference type="InterPro" id="IPR012676">
    <property type="entry name" value="TGS-like"/>
</dbReference>
<dbReference type="InterPro" id="IPR002320">
    <property type="entry name" value="Thr-tRNA-ligase_IIa"/>
</dbReference>
<dbReference type="InterPro" id="IPR018163">
    <property type="entry name" value="Thr/Ala-tRNA-synth_IIc_edit"/>
</dbReference>
<dbReference type="InterPro" id="IPR047246">
    <property type="entry name" value="ThrRS_anticodon"/>
</dbReference>
<dbReference type="InterPro" id="IPR033728">
    <property type="entry name" value="ThrRS_core"/>
</dbReference>
<dbReference type="InterPro" id="IPR012947">
    <property type="entry name" value="tRNA_SAD"/>
</dbReference>
<dbReference type="NCBIfam" id="TIGR00418">
    <property type="entry name" value="thrS"/>
    <property type="match status" value="1"/>
</dbReference>
<dbReference type="PANTHER" id="PTHR11451:SF44">
    <property type="entry name" value="THREONINE--TRNA LIGASE, CHLOROPLASTIC_MITOCHONDRIAL 2"/>
    <property type="match status" value="1"/>
</dbReference>
<dbReference type="PANTHER" id="PTHR11451">
    <property type="entry name" value="THREONINE-TRNA LIGASE"/>
    <property type="match status" value="1"/>
</dbReference>
<dbReference type="Pfam" id="PF03129">
    <property type="entry name" value="HGTP_anticodon"/>
    <property type="match status" value="1"/>
</dbReference>
<dbReference type="Pfam" id="PF02824">
    <property type="entry name" value="TGS"/>
    <property type="match status" value="1"/>
</dbReference>
<dbReference type="Pfam" id="PF00587">
    <property type="entry name" value="tRNA-synt_2b"/>
    <property type="match status" value="1"/>
</dbReference>
<dbReference type="Pfam" id="PF07973">
    <property type="entry name" value="tRNA_SAD"/>
    <property type="match status" value="1"/>
</dbReference>
<dbReference type="PRINTS" id="PR01047">
    <property type="entry name" value="TRNASYNTHTHR"/>
</dbReference>
<dbReference type="SMART" id="SM00863">
    <property type="entry name" value="tRNA_SAD"/>
    <property type="match status" value="1"/>
</dbReference>
<dbReference type="SUPFAM" id="SSF52954">
    <property type="entry name" value="Class II aaRS ABD-related"/>
    <property type="match status" value="1"/>
</dbReference>
<dbReference type="SUPFAM" id="SSF55681">
    <property type="entry name" value="Class II aaRS and biotin synthetases"/>
    <property type="match status" value="1"/>
</dbReference>
<dbReference type="SUPFAM" id="SSF81271">
    <property type="entry name" value="TGS-like"/>
    <property type="match status" value="1"/>
</dbReference>
<dbReference type="SUPFAM" id="SSF55186">
    <property type="entry name" value="ThrRS/AlaRS common domain"/>
    <property type="match status" value="1"/>
</dbReference>
<dbReference type="PROSITE" id="PS50862">
    <property type="entry name" value="AA_TRNA_LIGASE_II"/>
    <property type="match status" value="1"/>
</dbReference>
<dbReference type="PROSITE" id="PS51880">
    <property type="entry name" value="TGS"/>
    <property type="match status" value="1"/>
</dbReference>
<protein>
    <recommendedName>
        <fullName evidence="1">Threonine--tRNA ligase</fullName>
        <ecNumber evidence="1">6.1.1.3</ecNumber>
    </recommendedName>
    <alternativeName>
        <fullName evidence="1">Threonyl-tRNA synthetase</fullName>
        <shortName evidence="1">ThrRS</shortName>
    </alternativeName>
</protein>
<comment type="function">
    <text evidence="1">Catalyzes the attachment of threonine to tRNA(Thr) in a two-step reaction: L-threonine is first activated by ATP to form Thr-AMP and then transferred to the acceptor end of tRNA(Thr). Also edits incorrectly charged L-seryl-tRNA(Thr).</text>
</comment>
<comment type="catalytic activity">
    <reaction evidence="1">
        <text>tRNA(Thr) + L-threonine + ATP = L-threonyl-tRNA(Thr) + AMP + diphosphate + H(+)</text>
        <dbReference type="Rhea" id="RHEA:24624"/>
        <dbReference type="Rhea" id="RHEA-COMP:9670"/>
        <dbReference type="Rhea" id="RHEA-COMP:9704"/>
        <dbReference type="ChEBI" id="CHEBI:15378"/>
        <dbReference type="ChEBI" id="CHEBI:30616"/>
        <dbReference type="ChEBI" id="CHEBI:33019"/>
        <dbReference type="ChEBI" id="CHEBI:57926"/>
        <dbReference type="ChEBI" id="CHEBI:78442"/>
        <dbReference type="ChEBI" id="CHEBI:78534"/>
        <dbReference type="ChEBI" id="CHEBI:456215"/>
        <dbReference type="EC" id="6.1.1.3"/>
    </reaction>
</comment>
<comment type="cofactor">
    <cofactor evidence="1">
        <name>Zn(2+)</name>
        <dbReference type="ChEBI" id="CHEBI:29105"/>
    </cofactor>
    <text evidence="1">Binds 1 zinc ion per subunit.</text>
</comment>
<comment type="subunit">
    <text evidence="1">Homodimer.</text>
</comment>
<comment type="subcellular location">
    <subcellularLocation>
        <location evidence="1">Cytoplasm</location>
    </subcellularLocation>
</comment>
<comment type="similarity">
    <text evidence="1">Belongs to the class-II aminoacyl-tRNA synthetase family.</text>
</comment>